<reference key="1">
    <citation type="submission" date="2006-12" db="EMBL/GenBank/DDBJ databases">
        <title>Complete sequence of Mycobacterium vanbaalenii PYR-1.</title>
        <authorList>
            <consortium name="US DOE Joint Genome Institute"/>
            <person name="Copeland A."/>
            <person name="Lucas S."/>
            <person name="Lapidus A."/>
            <person name="Barry K."/>
            <person name="Detter J.C."/>
            <person name="Glavina del Rio T."/>
            <person name="Hammon N."/>
            <person name="Israni S."/>
            <person name="Dalin E."/>
            <person name="Tice H."/>
            <person name="Pitluck S."/>
            <person name="Singan V."/>
            <person name="Schmutz J."/>
            <person name="Larimer F."/>
            <person name="Land M."/>
            <person name="Hauser L."/>
            <person name="Kyrpides N."/>
            <person name="Anderson I.J."/>
            <person name="Miller C."/>
            <person name="Richardson P."/>
        </authorList>
    </citation>
    <scope>NUCLEOTIDE SEQUENCE [LARGE SCALE GENOMIC DNA]</scope>
    <source>
        <strain>DSM 7251 / JCM 13017 / BCRC 16820 / KCTC 9966 / NRRL B-24157 / PYR-1</strain>
    </source>
</reference>
<evidence type="ECO:0000255" key="1">
    <source>
        <dbReference type="HAMAP-Rule" id="MF_00225"/>
    </source>
</evidence>
<accession>A1TAT2</accession>
<sequence length="353" mass="36804">MYAALRKAFFLVPPERIHTWVFAGLRAATTAEPVRRRLARRLAPHDPILASTVFGTRFPGPLGLAAGFDKDGIGVHAWGALGFGYAEVGTVTAQAQPGNPAPRLFRLPADRALLNRMGFNNHGAGALAVQLTRTSSDVPIGVNIGKTKVTPPEHAAEDYAESARLLGPLAAYLVVNVSSPNTPGLRDLQSVESLRPILSAVLAETSTPVLVKIAPDLADQDIDEIADLAVELGLAGIVATNTTISRAGLATPGVDALGPGGISGPPVARRALEVLRRLYARVGDRLVLISVGGIETADDAWERIVSGASLLQGYTGFVYGGGLWAKDINDGLAARLRGHGFSGLAEAVGSAAR</sequence>
<organism>
    <name type="scientific">Mycolicibacterium vanbaalenii (strain DSM 7251 / JCM 13017 / BCRC 16820 / KCTC 9966 / NRRL B-24157 / PYR-1)</name>
    <name type="common">Mycobacterium vanbaalenii</name>
    <dbReference type="NCBI Taxonomy" id="350058"/>
    <lineage>
        <taxon>Bacteria</taxon>
        <taxon>Bacillati</taxon>
        <taxon>Actinomycetota</taxon>
        <taxon>Actinomycetes</taxon>
        <taxon>Mycobacteriales</taxon>
        <taxon>Mycobacteriaceae</taxon>
        <taxon>Mycolicibacterium</taxon>
    </lineage>
</organism>
<feature type="chain" id="PRO_1000024188" description="Dihydroorotate dehydrogenase (quinone)">
    <location>
        <begin position="1"/>
        <end position="353"/>
    </location>
</feature>
<feature type="active site" description="Nucleophile" evidence="1">
    <location>
        <position position="179"/>
    </location>
</feature>
<feature type="binding site" evidence="1">
    <location>
        <begin position="66"/>
        <end position="70"/>
    </location>
    <ligand>
        <name>FMN</name>
        <dbReference type="ChEBI" id="CHEBI:58210"/>
    </ligand>
</feature>
<feature type="binding site" evidence="1">
    <location>
        <position position="70"/>
    </location>
    <ligand>
        <name>substrate</name>
    </ligand>
</feature>
<feature type="binding site" evidence="1">
    <location>
        <position position="90"/>
    </location>
    <ligand>
        <name>FMN</name>
        <dbReference type="ChEBI" id="CHEBI:58210"/>
    </ligand>
</feature>
<feature type="binding site" evidence="1">
    <location>
        <begin position="115"/>
        <end position="119"/>
    </location>
    <ligand>
        <name>substrate</name>
    </ligand>
</feature>
<feature type="binding site" evidence="1">
    <location>
        <position position="143"/>
    </location>
    <ligand>
        <name>FMN</name>
        <dbReference type="ChEBI" id="CHEBI:58210"/>
    </ligand>
</feature>
<feature type="binding site" evidence="1">
    <location>
        <position position="176"/>
    </location>
    <ligand>
        <name>FMN</name>
        <dbReference type="ChEBI" id="CHEBI:58210"/>
    </ligand>
</feature>
<feature type="binding site" evidence="1">
    <location>
        <position position="176"/>
    </location>
    <ligand>
        <name>substrate</name>
    </ligand>
</feature>
<feature type="binding site" evidence="1">
    <location>
        <position position="181"/>
    </location>
    <ligand>
        <name>substrate</name>
    </ligand>
</feature>
<feature type="binding site" evidence="1">
    <location>
        <position position="212"/>
    </location>
    <ligand>
        <name>FMN</name>
        <dbReference type="ChEBI" id="CHEBI:58210"/>
    </ligand>
</feature>
<feature type="binding site" evidence="1">
    <location>
        <position position="240"/>
    </location>
    <ligand>
        <name>FMN</name>
        <dbReference type="ChEBI" id="CHEBI:58210"/>
    </ligand>
</feature>
<feature type="binding site" evidence="1">
    <location>
        <begin position="241"/>
        <end position="242"/>
    </location>
    <ligand>
        <name>substrate</name>
    </ligand>
</feature>
<feature type="binding site" evidence="1">
    <location>
        <position position="264"/>
    </location>
    <ligand>
        <name>FMN</name>
        <dbReference type="ChEBI" id="CHEBI:58210"/>
    </ligand>
</feature>
<feature type="binding site" evidence="1">
    <location>
        <position position="293"/>
    </location>
    <ligand>
        <name>FMN</name>
        <dbReference type="ChEBI" id="CHEBI:58210"/>
    </ligand>
</feature>
<feature type="binding site" evidence="1">
    <location>
        <begin position="314"/>
        <end position="315"/>
    </location>
    <ligand>
        <name>FMN</name>
        <dbReference type="ChEBI" id="CHEBI:58210"/>
    </ligand>
</feature>
<protein>
    <recommendedName>
        <fullName evidence="1">Dihydroorotate dehydrogenase (quinone)</fullName>
        <ecNumber evidence="1">1.3.5.2</ecNumber>
    </recommendedName>
    <alternativeName>
        <fullName evidence="1">DHOdehase</fullName>
        <shortName evidence="1">DHOD</shortName>
        <shortName evidence="1">DHODase</shortName>
    </alternativeName>
    <alternativeName>
        <fullName evidence="1">Dihydroorotate oxidase</fullName>
    </alternativeName>
</protein>
<keyword id="KW-1003">Cell membrane</keyword>
<keyword id="KW-0285">Flavoprotein</keyword>
<keyword id="KW-0288">FMN</keyword>
<keyword id="KW-0472">Membrane</keyword>
<keyword id="KW-0560">Oxidoreductase</keyword>
<keyword id="KW-0665">Pyrimidine biosynthesis</keyword>
<proteinExistence type="inferred from homology"/>
<comment type="function">
    <text evidence="1">Catalyzes the conversion of dihydroorotate to orotate with quinone as electron acceptor.</text>
</comment>
<comment type="catalytic activity">
    <reaction evidence="1">
        <text>(S)-dihydroorotate + a quinone = orotate + a quinol</text>
        <dbReference type="Rhea" id="RHEA:30187"/>
        <dbReference type="ChEBI" id="CHEBI:24646"/>
        <dbReference type="ChEBI" id="CHEBI:30839"/>
        <dbReference type="ChEBI" id="CHEBI:30864"/>
        <dbReference type="ChEBI" id="CHEBI:132124"/>
        <dbReference type="EC" id="1.3.5.2"/>
    </reaction>
</comment>
<comment type="cofactor">
    <cofactor evidence="1">
        <name>FMN</name>
        <dbReference type="ChEBI" id="CHEBI:58210"/>
    </cofactor>
    <text evidence="1">Binds 1 FMN per subunit.</text>
</comment>
<comment type="pathway">
    <text evidence="1">Pyrimidine metabolism; UMP biosynthesis via de novo pathway; orotate from (S)-dihydroorotate (quinone route): step 1/1.</text>
</comment>
<comment type="subunit">
    <text evidence="1">Monomer.</text>
</comment>
<comment type="subcellular location">
    <subcellularLocation>
        <location evidence="1">Cell membrane</location>
        <topology evidence="1">Peripheral membrane protein</topology>
    </subcellularLocation>
</comment>
<comment type="similarity">
    <text evidence="1">Belongs to the dihydroorotate dehydrogenase family. Type 2 subfamily.</text>
</comment>
<dbReference type="EC" id="1.3.5.2" evidence="1"/>
<dbReference type="EMBL" id="CP000511">
    <property type="protein sequence ID" value="ABM14282.1"/>
    <property type="molecule type" value="Genomic_DNA"/>
</dbReference>
<dbReference type="RefSeq" id="WP_011780686.1">
    <property type="nucleotide sequence ID" value="NZ_JACKSD010000223.1"/>
</dbReference>
<dbReference type="SMR" id="A1TAT2"/>
<dbReference type="STRING" id="350058.Mvan_3487"/>
<dbReference type="KEGG" id="mva:Mvan_3487"/>
<dbReference type="eggNOG" id="COG0167">
    <property type="taxonomic scope" value="Bacteria"/>
</dbReference>
<dbReference type="HOGENOM" id="CLU_013640_2_0_11"/>
<dbReference type="UniPathway" id="UPA00070">
    <property type="reaction ID" value="UER00946"/>
</dbReference>
<dbReference type="Proteomes" id="UP000009159">
    <property type="component" value="Chromosome"/>
</dbReference>
<dbReference type="GO" id="GO:0005737">
    <property type="term" value="C:cytoplasm"/>
    <property type="evidence" value="ECO:0007669"/>
    <property type="project" value="InterPro"/>
</dbReference>
<dbReference type="GO" id="GO:0005886">
    <property type="term" value="C:plasma membrane"/>
    <property type="evidence" value="ECO:0007669"/>
    <property type="project" value="UniProtKB-SubCell"/>
</dbReference>
<dbReference type="GO" id="GO:0106430">
    <property type="term" value="F:dihydroorotate dehydrogenase (quinone) activity"/>
    <property type="evidence" value="ECO:0007669"/>
    <property type="project" value="UniProtKB-EC"/>
</dbReference>
<dbReference type="GO" id="GO:0006207">
    <property type="term" value="P:'de novo' pyrimidine nucleobase biosynthetic process"/>
    <property type="evidence" value="ECO:0007669"/>
    <property type="project" value="InterPro"/>
</dbReference>
<dbReference type="GO" id="GO:0044205">
    <property type="term" value="P:'de novo' UMP biosynthetic process"/>
    <property type="evidence" value="ECO:0007669"/>
    <property type="project" value="UniProtKB-UniRule"/>
</dbReference>
<dbReference type="CDD" id="cd04738">
    <property type="entry name" value="DHOD_2_like"/>
    <property type="match status" value="1"/>
</dbReference>
<dbReference type="FunFam" id="3.20.20.70:FF:000123">
    <property type="entry name" value="Dihydroorotate dehydrogenase (quinone)"/>
    <property type="match status" value="1"/>
</dbReference>
<dbReference type="Gene3D" id="3.20.20.70">
    <property type="entry name" value="Aldolase class I"/>
    <property type="match status" value="1"/>
</dbReference>
<dbReference type="HAMAP" id="MF_00225">
    <property type="entry name" value="DHO_dh_type2"/>
    <property type="match status" value="1"/>
</dbReference>
<dbReference type="InterPro" id="IPR013785">
    <property type="entry name" value="Aldolase_TIM"/>
</dbReference>
<dbReference type="InterPro" id="IPR050074">
    <property type="entry name" value="DHO_dehydrogenase"/>
</dbReference>
<dbReference type="InterPro" id="IPR012135">
    <property type="entry name" value="Dihydroorotate_DH_1_2"/>
</dbReference>
<dbReference type="InterPro" id="IPR005719">
    <property type="entry name" value="Dihydroorotate_DH_2"/>
</dbReference>
<dbReference type="InterPro" id="IPR005720">
    <property type="entry name" value="Dihydroorotate_DH_cat"/>
</dbReference>
<dbReference type="InterPro" id="IPR001295">
    <property type="entry name" value="Dihydroorotate_DH_CS"/>
</dbReference>
<dbReference type="NCBIfam" id="NF003648">
    <property type="entry name" value="PRK05286.2-1"/>
    <property type="match status" value="1"/>
</dbReference>
<dbReference type="NCBIfam" id="NF003652">
    <property type="entry name" value="PRK05286.2-5"/>
    <property type="match status" value="1"/>
</dbReference>
<dbReference type="NCBIfam" id="TIGR01036">
    <property type="entry name" value="pyrD_sub2"/>
    <property type="match status" value="1"/>
</dbReference>
<dbReference type="PANTHER" id="PTHR48109:SF4">
    <property type="entry name" value="DIHYDROOROTATE DEHYDROGENASE (QUINONE), MITOCHONDRIAL"/>
    <property type="match status" value="1"/>
</dbReference>
<dbReference type="PANTHER" id="PTHR48109">
    <property type="entry name" value="DIHYDROOROTATE DEHYDROGENASE (QUINONE), MITOCHONDRIAL-RELATED"/>
    <property type="match status" value="1"/>
</dbReference>
<dbReference type="Pfam" id="PF01180">
    <property type="entry name" value="DHO_dh"/>
    <property type="match status" value="1"/>
</dbReference>
<dbReference type="PIRSF" id="PIRSF000164">
    <property type="entry name" value="DHO_oxidase"/>
    <property type="match status" value="1"/>
</dbReference>
<dbReference type="SUPFAM" id="SSF51395">
    <property type="entry name" value="FMN-linked oxidoreductases"/>
    <property type="match status" value="1"/>
</dbReference>
<dbReference type="PROSITE" id="PS00911">
    <property type="entry name" value="DHODEHASE_1"/>
    <property type="match status" value="1"/>
</dbReference>
<dbReference type="PROSITE" id="PS00912">
    <property type="entry name" value="DHODEHASE_2"/>
    <property type="match status" value="1"/>
</dbReference>
<name>PYRD_MYCVP</name>
<gene>
    <name evidence="1" type="primary">pyrD</name>
    <name type="ordered locus">Mvan_3487</name>
</gene>